<proteinExistence type="inferred from homology"/>
<protein>
    <recommendedName>
        <fullName evidence="1">Large ribosomal subunit protein uL24</fullName>
    </recommendedName>
    <alternativeName>
        <fullName evidence="2">50S ribosomal protein L24</fullName>
    </alternativeName>
</protein>
<organism>
    <name type="scientific">Wolbachia sp. subsp. Brugia malayi (strain TRS)</name>
    <dbReference type="NCBI Taxonomy" id="292805"/>
    <lineage>
        <taxon>Bacteria</taxon>
        <taxon>Pseudomonadati</taxon>
        <taxon>Pseudomonadota</taxon>
        <taxon>Alphaproteobacteria</taxon>
        <taxon>Rickettsiales</taxon>
        <taxon>Anaplasmataceae</taxon>
        <taxon>Wolbachieae</taxon>
        <taxon>Wolbachia</taxon>
    </lineage>
</organism>
<gene>
    <name evidence="1" type="primary">rplX</name>
    <name type="ordered locus">Wbm0330</name>
</gene>
<comment type="function">
    <text evidence="1">One of two assembly initiator proteins, it binds directly to the 5'-end of the 23S rRNA, where it nucleates assembly of the 50S subunit.</text>
</comment>
<comment type="function">
    <text evidence="1">One of the proteins that surrounds the polypeptide exit tunnel on the outside of the subunit.</text>
</comment>
<comment type="subunit">
    <text evidence="1">Part of the 50S ribosomal subunit.</text>
</comment>
<comment type="similarity">
    <text evidence="1">Belongs to the universal ribosomal protein uL24 family.</text>
</comment>
<accession>Q5GSV5</accession>
<reference key="1">
    <citation type="journal article" date="2005" name="PLoS Biol.">
        <title>The Wolbachia genome of Brugia malayi: endosymbiont evolution within a human pathogenic nematode.</title>
        <authorList>
            <person name="Foster J."/>
            <person name="Ganatra M."/>
            <person name="Kamal I."/>
            <person name="Ware J."/>
            <person name="Makarova K."/>
            <person name="Ivanova N."/>
            <person name="Bhattacharyya A."/>
            <person name="Kapatral V."/>
            <person name="Kumar S."/>
            <person name="Posfai J."/>
            <person name="Vincze T."/>
            <person name="Ingram J."/>
            <person name="Moran L."/>
            <person name="Lapidus A."/>
            <person name="Omelchenko M."/>
            <person name="Kyrpides N."/>
            <person name="Ghedin E."/>
            <person name="Wang S."/>
            <person name="Goltsman E."/>
            <person name="Joukov V."/>
            <person name="Ostrovskaya O."/>
            <person name="Tsukerman K."/>
            <person name="Mazur M."/>
            <person name="Comb D."/>
            <person name="Koonin E."/>
            <person name="Slatko B."/>
        </authorList>
    </citation>
    <scope>NUCLEOTIDE SEQUENCE [LARGE SCALE GENOMIC DNA]</scope>
    <source>
        <strain>TRS</strain>
    </source>
</reference>
<feature type="chain" id="PRO_0000241686" description="Large ribosomal subunit protein uL24">
    <location>
        <begin position="1"/>
        <end position="105"/>
    </location>
</feature>
<evidence type="ECO:0000255" key="1">
    <source>
        <dbReference type="HAMAP-Rule" id="MF_01326"/>
    </source>
</evidence>
<evidence type="ECO:0000305" key="2"/>
<keyword id="KW-1185">Reference proteome</keyword>
<keyword id="KW-0687">Ribonucleoprotein</keyword>
<keyword id="KW-0689">Ribosomal protein</keyword>
<keyword id="KW-0694">RNA-binding</keyword>
<keyword id="KW-0699">rRNA-binding</keyword>
<sequence>MSAKIRSGDDVIVLTGRDRGKIGKVIKIVTCSAKRKAVVSGINVHKKHAKPKAGSSGGIINKELAIDISNIAILDPKYKAPTRVGFKVIDSKKVRFAKVSGEVIG</sequence>
<dbReference type="EMBL" id="AE017321">
    <property type="protein sequence ID" value="AAW70919.1"/>
    <property type="molecule type" value="Genomic_DNA"/>
</dbReference>
<dbReference type="RefSeq" id="WP_011256529.1">
    <property type="nucleotide sequence ID" value="NC_006833.1"/>
</dbReference>
<dbReference type="SMR" id="Q5GSV5"/>
<dbReference type="STRING" id="292805.Wbm0330"/>
<dbReference type="KEGG" id="wbm:Wbm0330"/>
<dbReference type="eggNOG" id="COG0198">
    <property type="taxonomic scope" value="Bacteria"/>
</dbReference>
<dbReference type="HOGENOM" id="CLU_093315_2_2_5"/>
<dbReference type="Proteomes" id="UP000000534">
    <property type="component" value="Chromosome"/>
</dbReference>
<dbReference type="GO" id="GO:1990904">
    <property type="term" value="C:ribonucleoprotein complex"/>
    <property type="evidence" value="ECO:0007669"/>
    <property type="project" value="UniProtKB-KW"/>
</dbReference>
<dbReference type="GO" id="GO:0005840">
    <property type="term" value="C:ribosome"/>
    <property type="evidence" value="ECO:0007669"/>
    <property type="project" value="UniProtKB-KW"/>
</dbReference>
<dbReference type="GO" id="GO:0019843">
    <property type="term" value="F:rRNA binding"/>
    <property type="evidence" value="ECO:0007669"/>
    <property type="project" value="UniProtKB-UniRule"/>
</dbReference>
<dbReference type="GO" id="GO:0003735">
    <property type="term" value="F:structural constituent of ribosome"/>
    <property type="evidence" value="ECO:0007669"/>
    <property type="project" value="InterPro"/>
</dbReference>
<dbReference type="GO" id="GO:0006412">
    <property type="term" value="P:translation"/>
    <property type="evidence" value="ECO:0007669"/>
    <property type="project" value="UniProtKB-UniRule"/>
</dbReference>
<dbReference type="CDD" id="cd06089">
    <property type="entry name" value="KOW_RPL26"/>
    <property type="match status" value="1"/>
</dbReference>
<dbReference type="Gene3D" id="2.30.30.30">
    <property type="match status" value="1"/>
</dbReference>
<dbReference type="HAMAP" id="MF_01326_B">
    <property type="entry name" value="Ribosomal_uL24_B"/>
    <property type="match status" value="1"/>
</dbReference>
<dbReference type="InterPro" id="IPR014722">
    <property type="entry name" value="Rib_uL2_dom2"/>
</dbReference>
<dbReference type="InterPro" id="IPR003256">
    <property type="entry name" value="Ribosomal_uL24"/>
</dbReference>
<dbReference type="InterPro" id="IPR005825">
    <property type="entry name" value="Ribosomal_uL24_CS"/>
</dbReference>
<dbReference type="InterPro" id="IPR041988">
    <property type="entry name" value="Ribosomal_uL24_KOW"/>
</dbReference>
<dbReference type="InterPro" id="IPR008991">
    <property type="entry name" value="Translation_prot_SH3-like_sf"/>
</dbReference>
<dbReference type="NCBIfam" id="TIGR01079">
    <property type="entry name" value="rplX_bact"/>
    <property type="match status" value="1"/>
</dbReference>
<dbReference type="PANTHER" id="PTHR12903">
    <property type="entry name" value="MITOCHONDRIAL RIBOSOMAL PROTEIN L24"/>
    <property type="match status" value="1"/>
</dbReference>
<dbReference type="Pfam" id="PF17136">
    <property type="entry name" value="ribosomal_L24"/>
    <property type="match status" value="1"/>
</dbReference>
<dbReference type="SUPFAM" id="SSF50104">
    <property type="entry name" value="Translation proteins SH3-like domain"/>
    <property type="match status" value="1"/>
</dbReference>
<dbReference type="PROSITE" id="PS01108">
    <property type="entry name" value="RIBOSOMAL_L24"/>
    <property type="match status" value="1"/>
</dbReference>
<name>RL24_WOLTR</name>